<evidence type="ECO:0000255" key="1">
    <source>
        <dbReference type="HAMAP-Rule" id="MF_00501"/>
    </source>
</evidence>
<evidence type="ECO:0000305" key="2"/>
<name>RL31_ACIC1</name>
<dbReference type="EMBL" id="CP000481">
    <property type="protein sequence ID" value="ABK52413.1"/>
    <property type="molecule type" value="Genomic_DNA"/>
</dbReference>
<dbReference type="RefSeq" id="WP_011719476.1">
    <property type="nucleotide sequence ID" value="NC_008578.1"/>
</dbReference>
<dbReference type="SMR" id="A0LSK3"/>
<dbReference type="FunCoup" id="A0LSK3">
    <property type="interactions" value="81"/>
</dbReference>
<dbReference type="STRING" id="351607.Acel_0640"/>
<dbReference type="KEGG" id="ace:Acel_0640"/>
<dbReference type="eggNOG" id="COG0254">
    <property type="taxonomic scope" value="Bacteria"/>
</dbReference>
<dbReference type="HOGENOM" id="CLU_114306_4_3_11"/>
<dbReference type="InParanoid" id="A0LSK3"/>
<dbReference type="OrthoDB" id="9803251at2"/>
<dbReference type="Proteomes" id="UP000008221">
    <property type="component" value="Chromosome"/>
</dbReference>
<dbReference type="GO" id="GO:1990904">
    <property type="term" value="C:ribonucleoprotein complex"/>
    <property type="evidence" value="ECO:0007669"/>
    <property type="project" value="UniProtKB-KW"/>
</dbReference>
<dbReference type="GO" id="GO:0005840">
    <property type="term" value="C:ribosome"/>
    <property type="evidence" value="ECO:0007669"/>
    <property type="project" value="UniProtKB-KW"/>
</dbReference>
<dbReference type="GO" id="GO:0046872">
    <property type="term" value="F:metal ion binding"/>
    <property type="evidence" value="ECO:0007669"/>
    <property type="project" value="UniProtKB-KW"/>
</dbReference>
<dbReference type="GO" id="GO:0019843">
    <property type="term" value="F:rRNA binding"/>
    <property type="evidence" value="ECO:0007669"/>
    <property type="project" value="UniProtKB-KW"/>
</dbReference>
<dbReference type="GO" id="GO:0003735">
    <property type="term" value="F:structural constituent of ribosome"/>
    <property type="evidence" value="ECO:0007669"/>
    <property type="project" value="InterPro"/>
</dbReference>
<dbReference type="GO" id="GO:0006412">
    <property type="term" value="P:translation"/>
    <property type="evidence" value="ECO:0007669"/>
    <property type="project" value="UniProtKB-UniRule"/>
</dbReference>
<dbReference type="Gene3D" id="4.10.830.30">
    <property type="entry name" value="Ribosomal protein L31"/>
    <property type="match status" value="1"/>
</dbReference>
<dbReference type="HAMAP" id="MF_00501">
    <property type="entry name" value="Ribosomal_bL31_1"/>
    <property type="match status" value="1"/>
</dbReference>
<dbReference type="InterPro" id="IPR034704">
    <property type="entry name" value="Ribosomal_bL28/bL31-like_sf"/>
</dbReference>
<dbReference type="InterPro" id="IPR002150">
    <property type="entry name" value="Ribosomal_bL31"/>
</dbReference>
<dbReference type="InterPro" id="IPR027491">
    <property type="entry name" value="Ribosomal_bL31_A"/>
</dbReference>
<dbReference type="InterPro" id="IPR042105">
    <property type="entry name" value="Ribosomal_bL31_sf"/>
</dbReference>
<dbReference type="NCBIfam" id="TIGR00105">
    <property type="entry name" value="L31"/>
    <property type="match status" value="1"/>
</dbReference>
<dbReference type="NCBIfam" id="NF000612">
    <property type="entry name" value="PRK00019.1"/>
    <property type="match status" value="1"/>
</dbReference>
<dbReference type="NCBIfam" id="NF001809">
    <property type="entry name" value="PRK00528.1"/>
    <property type="match status" value="1"/>
</dbReference>
<dbReference type="PANTHER" id="PTHR33280">
    <property type="entry name" value="50S RIBOSOMAL PROTEIN L31, CHLOROPLASTIC"/>
    <property type="match status" value="1"/>
</dbReference>
<dbReference type="PANTHER" id="PTHR33280:SF1">
    <property type="entry name" value="LARGE RIBOSOMAL SUBUNIT PROTEIN BL31C"/>
    <property type="match status" value="1"/>
</dbReference>
<dbReference type="Pfam" id="PF01197">
    <property type="entry name" value="Ribosomal_L31"/>
    <property type="match status" value="1"/>
</dbReference>
<dbReference type="PRINTS" id="PR01249">
    <property type="entry name" value="RIBOSOMALL31"/>
</dbReference>
<dbReference type="SUPFAM" id="SSF143800">
    <property type="entry name" value="L28p-like"/>
    <property type="match status" value="1"/>
</dbReference>
<dbReference type="PROSITE" id="PS01143">
    <property type="entry name" value="RIBOSOMAL_L31"/>
    <property type="match status" value="1"/>
</dbReference>
<gene>
    <name evidence="1" type="primary">rpmE</name>
    <name type="ordered locus">Acel_0640</name>
</gene>
<sequence length="86" mass="9470">MKPDIHPEYRETTVICSCGNTFTTRSTAKSGVIHAEVCSNCHPFYTGKQKILDVGGRVQKFEKRFGQLTGAARVARSTGKPRAGRK</sequence>
<reference key="1">
    <citation type="journal article" date="2009" name="Genome Res.">
        <title>Complete genome of the cellulolytic thermophile Acidothermus cellulolyticus 11B provides insights into its ecophysiological and evolutionary adaptations.</title>
        <authorList>
            <person name="Barabote R.D."/>
            <person name="Xie G."/>
            <person name="Leu D.H."/>
            <person name="Normand P."/>
            <person name="Necsulea A."/>
            <person name="Daubin V."/>
            <person name="Medigue C."/>
            <person name="Adney W.S."/>
            <person name="Xu X.C."/>
            <person name="Lapidus A."/>
            <person name="Parales R.E."/>
            <person name="Detter C."/>
            <person name="Pujic P."/>
            <person name="Bruce D."/>
            <person name="Lavire C."/>
            <person name="Challacombe J.F."/>
            <person name="Brettin T.S."/>
            <person name="Berry A.M."/>
        </authorList>
    </citation>
    <scope>NUCLEOTIDE SEQUENCE [LARGE SCALE GENOMIC DNA]</scope>
    <source>
        <strain>ATCC 43068 / DSM 8971 / 11B</strain>
    </source>
</reference>
<protein>
    <recommendedName>
        <fullName evidence="1">Large ribosomal subunit protein bL31</fullName>
    </recommendedName>
    <alternativeName>
        <fullName evidence="2">50S ribosomal protein L31</fullName>
    </alternativeName>
</protein>
<keyword id="KW-0479">Metal-binding</keyword>
<keyword id="KW-1185">Reference proteome</keyword>
<keyword id="KW-0687">Ribonucleoprotein</keyword>
<keyword id="KW-0689">Ribosomal protein</keyword>
<keyword id="KW-0694">RNA-binding</keyword>
<keyword id="KW-0699">rRNA-binding</keyword>
<keyword id="KW-0862">Zinc</keyword>
<organism>
    <name type="scientific">Acidothermus cellulolyticus (strain ATCC 43068 / DSM 8971 / 11B)</name>
    <dbReference type="NCBI Taxonomy" id="351607"/>
    <lineage>
        <taxon>Bacteria</taxon>
        <taxon>Bacillati</taxon>
        <taxon>Actinomycetota</taxon>
        <taxon>Actinomycetes</taxon>
        <taxon>Acidothermales</taxon>
        <taxon>Acidothermaceae</taxon>
        <taxon>Acidothermus</taxon>
    </lineage>
</organism>
<proteinExistence type="inferred from homology"/>
<feature type="chain" id="PRO_1000126547" description="Large ribosomal subunit protein bL31">
    <location>
        <begin position="1"/>
        <end position="86"/>
    </location>
</feature>
<feature type="binding site" evidence="1">
    <location>
        <position position="16"/>
    </location>
    <ligand>
        <name>Zn(2+)</name>
        <dbReference type="ChEBI" id="CHEBI:29105"/>
    </ligand>
</feature>
<feature type="binding site" evidence="1">
    <location>
        <position position="18"/>
    </location>
    <ligand>
        <name>Zn(2+)</name>
        <dbReference type="ChEBI" id="CHEBI:29105"/>
    </ligand>
</feature>
<feature type="binding site" evidence="1">
    <location>
        <position position="38"/>
    </location>
    <ligand>
        <name>Zn(2+)</name>
        <dbReference type="ChEBI" id="CHEBI:29105"/>
    </ligand>
</feature>
<feature type="binding site" evidence="1">
    <location>
        <position position="41"/>
    </location>
    <ligand>
        <name>Zn(2+)</name>
        <dbReference type="ChEBI" id="CHEBI:29105"/>
    </ligand>
</feature>
<accession>A0LSK3</accession>
<comment type="function">
    <text evidence="1">Binds the 23S rRNA.</text>
</comment>
<comment type="cofactor">
    <cofactor evidence="1">
        <name>Zn(2+)</name>
        <dbReference type="ChEBI" id="CHEBI:29105"/>
    </cofactor>
    <text evidence="1">Binds 1 zinc ion per subunit.</text>
</comment>
<comment type="subunit">
    <text evidence="1">Part of the 50S ribosomal subunit.</text>
</comment>
<comment type="similarity">
    <text evidence="1">Belongs to the bacterial ribosomal protein bL31 family. Type A subfamily.</text>
</comment>